<protein>
    <recommendedName>
        <fullName evidence="1">Serine--tRNA ligase</fullName>
        <ecNumber evidence="1">6.1.1.11</ecNumber>
    </recommendedName>
    <alternativeName>
        <fullName evidence="1">Seryl-tRNA synthetase</fullName>
        <shortName evidence="1">SerRS</shortName>
    </alternativeName>
    <alternativeName>
        <fullName evidence="1">Seryl-tRNA(Ser/Sec) synthetase</fullName>
    </alternativeName>
</protein>
<evidence type="ECO:0000255" key="1">
    <source>
        <dbReference type="HAMAP-Rule" id="MF_00176"/>
    </source>
</evidence>
<reference key="1">
    <citation type="submission" date="2007-07" db="EMBL/GenBank/DDBJ databases">
        <title>Complete genome sequence of Campylobacter jejuni subsp doylei 269.97 isolated from human blood.</title>
        <authorList>
            <person name="Fouts D.E."/>
            <person name="Mongodin E.F."/>
            <person name="Puiu D."/>
            <person name="Sebastian Y."/>
            <person name="Miller W.G."/>
            <person name="Mandrell R.E."/>
            <person name="Lastovica A.J."/>
            <person name="Nelson K.E."/>
        </authorList>
    </citation>
    <scope>NUCLEOTIDE SEQUENCE [LARGE SCALE GENOMIC DNA]</scope>
    <source>
        <strain>ATCC BAA-1458 / RM4099 / 269.97</strain>
    </source>
</reference>
<comment type="function">
    <text evidence="1">Catalyzes the attachment of serine to tRNA(Ser). Is also able to aminoacylate tRNA(Sec) with serine, to form the misacylated tRNA L-seryl-tRNA(Sec), which will be further converted into selenocysteinyl-tRNA(Sec).</text>
</comment>
<comment type="catalytic activity">
    <reaction evidence="1">
        <text>tRNA(Ser) + L-serine + ATP = L-seryl-tRNA(Ser) + AMP + diphosphate + H(+)</text>
        <dbReference type="Rhea" id="RHEA:12292"/>
        <dbReference type="Rhea" id="RHEA-COMP:9669"/>
        <dbReference type="Rhea" id="RHEA-COMP:9703"/>
        <dbReference type="ChEBI" id="CHEBI:15378"/>
        <dbReference type="ChEBI" id="CHEBI:30616"/>
        <dbReference type="ChEBI" id="CHEBI:33019"/>
        <dbReference type="ChEBI" id="CHEBI:33384"/>
        <dbReference type="ChEBI" id="CHEBI:78442"/>
        <dbReference type="ChEBI" id="CHEBI:78533"/>
        <dbReference type="ChEBI" id="CHEBI:456215"/>
        <dbReference type="EC" id="6.1.1.11"/>
    </reaction>
</comment>
<comment type="catalytic activity">
    <reaction evidence="1">
        <text>tRNA(Sec) + L-serine + ATP = L-seryl-tRNA(Sec) + AMP + diphosphate + H(+)</text>
        <dbReference type="Rhea" id="RHEA:42580"/>
        <dbReference type="Rhea" id="RHEA-COMP:9742"/>
        <dbReference type="Rhea" id="RHEA-COMP:10128"/>
        <dbReference type="ChEBI" id="CHEBI:15378"/>
        <dbReference type="ChEBI" id="CHEBI:30616"/>
        <dbReference type="ChEBI" id="CHEBI:33019"/>
        <dbReference type="ChEBI" id="CHEBI:33384"/>
        <dbReference type="ChEBI" id="CHEBI:78442"/>
        <dbReference type="ChEBI" id="CHEBI:78533"/>
        <dbReference type="ChEBI" id="CHEBI:456215"/>
        <dbReference type="EC" id="6.1.1.11"/>
    </reaction>
</comment>
<comment type="pathway">
    <text evidence="1">Aminoacyl-tRNA biosynthesis; selenocysteinyl-tRNA(Sec) biosynthesis; L-seryl-tRNA(Sec) from L-serine and tRNA(Sec): step 1/1.</text>
</comment>
<comment type="subunit">
    <text evidence="1">Homodimer. The tRNA molecule binds across the dimer.</text>
</comment>
<comment type="subcellular location">
    <subcellularLocation>
        <location evidence="1">Cytoplasm</location>
    </subcellularLocation>
</comment>
<comment type="domain">
    <text evidence="1">Consists of two distinct domains, a catalytic core and a N-terminal extension that is involved in tRNA binding.</text>
</comment>
<comment type="similarity">
    <text evidence="1">Belongs to the class-II aminoacyl-tRNA synthetase family. Type-1 seryl-tRNA synthetase subfamily.</text>
</comment>
<organism>
    <name type="scientific">Campylobacter jejuni subsp. doylei (strain ATCC BAA-1458 / RM4099 / 269.97)</name>
    <dbReference type="NCBI Taxonomy" id="360109"/>
    <lineage>
        <taxon>Bacteria</taxon>
        <taxon>Pseudomonadati</taxon>
        <taxon>Campylobacterota</taxon>
        <taxon>Epsilonproteobacteria</taxon>
        <taxon>Campylobacterales</taxon>
        <taxon>Campylobacteraceae</taxon>
        <taxon>Campylobacter</taxon>
    </lineage>
</organism>
<dbReference type="EC" id="6.1.1.11" evidence="1"/>
<dbReference type="EMBL" id="CP000768">
    <property type="protein sequence ID" value="ABS43416.1"/>
    <property type="molecule type" value="Genomic_DNA"/>
</dbReference>
<dbReference type="SMR" id="A7H4Y8"/>
<dbReference type="KEGG" id="cjd:JJD26997_1569"/>
<dbReference type="HOGENOM" id="CLU_023797_1_1_7"/>
<dbReference type="UniPathway" id="UPA00906">
    <property type="reaction ID" value="UER00895"/>
</dbReference>
<dbReference type="Proteomes" id="UP000002302">
    <property type="component" value="Chromosome"/>
</dbReference>
<dbReference type="GO" id="GO:0005737">
    <property type="term" value="C:cytoplasm"/>
    <property type="evidence" value="ECO:0007669"/>
    <property type="project" value="UniProtKB-SubCell"/>
</dbReference>
<dbReference type="GO" id="GO:0005524">
    <property type="term" value="F:ATP binding"/>
    <property type="evidence" value="ECO:0007669"/>
    <property type="project" value="UniProtKB-UniRule"/>
</dbReference>
<dbReference type="GO" id="GO:0004828">
    <property type="term" value="F:serine-tRNA ligase activity"/>
    <property type="evidence" value="ECO:0007669"/>
    <property type="project" value="UniProtKB-UniRule"/>
</dbReference>
<dbReference type="GO" id="GO:0016260">
    <property type="term" value="P:selenocysteine biosynthetic process"/>
    <property type="evidence" value="ECO:0007669"/>
    <property type="project" value="UniProtKB-UniRule"/>
</dbReference>
<dbReference type="GO" id="GO:0006434">
    <property type="term" value="P:seryl-tRNA aminoacylation"/>
    <property type="evidence" value="ECO:0007669"/>
    <property type="project" value="UniProtKB-UniRule"/>
</dbReference>
<dbReference type="CDD" id="cd00770">
    <property type="entry name" value="SerRS_core"/>
    <property type="match status" value="1"/>
</dbReference>
<dbReference type="Gene3D" id="3.30.930.10">
    <property type="entry name" value="Bira Bifunctional Protein, Domain 2"/>
    <property type="match status" value="1"/>
</dbReference>
<dbReference type="Gene3D" id="1.10.287.40">
    <property type="entry name" value="Serine-tRNA synthetase, tRNA binding domain"/>
    <property type="match status" value="1"/>
</dbReference>
<dbReference type="HAMAP" id="MF_00176">
    <property type="entry name" value="Ser_tRNA_synth_type1"/>
    <property type="match status" value="1"/>
</dbReference>
<dbReference type="InterPro" id="IPR002314">
    <property type="entry name" value="aa-tRNA-synt_IIb"/>
</dbReference>
<dbReference type="InterPro" id="IPR006195">
    <property type="entry name" value="aa-tRNA-synth_II"/>
</dbReference>
<dbReference type="InterPro" id="IPR045864">
    <property type="entry name" value="aa-tRNA-synth_II/BPL/LPL"/>
</dbReference>
<dbReference type="InterPro" id="IPR002317">
    <property type="entry name" value="Ser-tRNA-ligase_type_1"/>
</dbReference>
<dbReference type="InterPro" id="IPR015866">
    <property type="entry name" value="Ser-tRNA-synth_1_N"/>
</dbReference>
<dbReference type="InterPro" id="IPR042103">
    <property type="entry name" value="SerRS_1_N_sf"/>
</dbReference>
<dbReference type="InterPro" id="IPR033729">
    <property type="entry name" value="SerRS_core"/>
</dbReference>
<dbReference type="InterPro" id="IPR010978">
    <property type="entry name" value="tRNA-bd_arm"/>
</dbReference>
<dbReference type="NCBIfam" id="TIGR00414">
    <property type="entry name" value="serS"/>
    <property type="match status" value="1"/>
</dbReference>
<dbReference type="PANTHER" id="PTHR43697:SF1">
    <property type="entry name" value="SERINE--TRNA LIGASE"/>
    <property type="match status" value="1"/>
</dbReference>
<dbReference type="PANTHER" id="PTHR43697">
    <property type="entry name" value="SERYL-TRNA SYNTHETASE"/>
    <property type="match status" value="1"/>
</dbReference>
<dbReference type="Pfam" id="PF02403">
    <property type="entry name" value="Seryl_tRNA_N"/>
    <property type="match status" value="1"/>
</dbReference>
<dbReference type="Pfam" id="PF00587">
    <property type="entry name" value="tRNA-synt_2b"/>
    <property type="match status" value="1"/>
</dbReference>
<dbReference type="PIRSF" id="PIRSF001529">
    <property type="entry name" value="Ser-tRNA-synth_IIa"/>
    <property type="match status" value="1"/>
</dbReference>
<dbReference type="PRINTS" id="PR00981">
    <property type="entry name" value="TRNASYNTHSER"/>
</dbReference>
<dbReference type="SUPFAM" id="SSF55681">
    <property type="entry name" value="Class II aaRS and biotin synthetases"/>
    <property type="match status" value="1"/>
</dbReference>
<dbReference type="SUPFAM" id="SSF46589">
    <property type="entry name" value="tRNA-binding arm"/>
    <property type="match status" value="1"/>
</dbReference>
<dbReference type="PROSITE" id="PS50862">
    <property type="entry name" value="AA_TRNA_LIGASE_II"/>
    <property type="match status" value="1"/>
</dbReference>
<gene>
    <name evidence="1" type="primary">serS</name>
    <name type="ordered locus">JJD26997_1569</name>
</gene>
<keyword id="KW-0030">Aminoacyl-tRNA synthetase</keyword>
<keyword id="KW-0067">ATP-binding</keyword>
<keyword id="KW-0963">Cytoplasm</keyword>
<keyword id="KW-0436">Ligase</keyword>
<keyword id="KW-0547">Nucleotide-binding</keyword>
<keyword id="KW-0648">Protein biosynthesis</keyword>
<accession>A7H4Y8</accession>
<feature type="chain" id="PRO_1000019644" description="Serine--tRNA ligase">
    <location>
        <begin position="1"/>
        <end position="411"/>
    </location>
</feature>
<feature type="binding site" evidence="1">
    <location>
        <begin position="226"/>
        <end position="228"/>
    </location>
    <ligand>
        <name>L-serine</name>
        <dbReference type="ChEBI" id="CHEBI:33384"/>
    </ligand>
</feature>
<feature type="binding site" evidence="1">
    <location>
        <begin position="257"/>
        <end position="259"/>
    </location>
    <ligand>
        <name>ATP</name>
        <dbReference type="ChEBI" id="CHEBI:30616"/>
    </ligand>
</feature>
<feature type="binding site" evidence="1">
    <location>
        <position position="280"/>
    </location>
    <ligand>
        <name>L-serine</name>
        <dbReference type="ChEBI" id="CHEBI:33384"/>
    </ligand>
</feature>
<feature type="binding site" evidence="1">
    <location>
        <begin position="344"/>
        <end position="347"/>
    </location>
    <ligand>
        <name>ATP</name>
        <dbReference type="ChEBI" id="CHEBI:30616"/>
    </ligand>
</feature>
<feature type="binding site" evidence="1">
    <location>
        <position position="379"/>
    </location>
    <ligand>
        <name>L-serine</name>
        <dbReference type="ChEBI" id="CHEBI:33384"/>
    </ligand>
</feature>
<sequence length="411" mass="46616">MLDLKNLQNNFDEVTKKLKSKKVDENILKKLAELFASLKKEKTALEEFQAFQNKFSKELATAEDKESLKAKLSENKSKINEQSTKVNVLENELEEIAHAIPNIPDECVPVGEDENENVELKKVLNPPSFDFTPKEHFELGESLNWLDFVRGVKISQSRFCVLKNEGALLSRALVNYMIDFNRSRGFEFVNVPFLVNGATMFGTGQLPKFKEDMYKVDDEDLYLISTSEIPITNLYSGEILTSETLPIKMTCYSACFRKEAGSAGRDTRGIIRQHQFEKVELVSITKPEQSDSVFNEMLECASDLLSSLGLAHRHLMLCTGDLGFSAAKTVDLEVWLPGQNKYREISSVSNCRDFQARRAKIRYKNEQGKNELVHTLNGSSLAVGRTLVAIMENYQDKEGKIHIPDALKKYF</sequence>
<name>SYS_CAMJD</name>
<proteinExistence type="inferred from homology"/>